<organism>
    <name type="scientific">Delftia acidovorans (strain DSM 14801 / SPH-1)</name>
    <dbReference type="NCBI Taxonomy" id="398578"/>
    <lineage>
        <taxon>Bacteria</taxon>
        <taxon>Pseudomonadati</taxon>
        <taxon>Pseudomonadota</taxon>
        <taxon>Betaproteobacteria</taxon>
        <taxon>Burkholderiales</taxon>
        <taxon>Comamonadaceae</taxon>
        <taxon>Delftia</taxon>
    </lineage>
</organism>
<sequence length="103" mass="11257">MYAVIKTGGKQYRVAAGEKIKVEQIAADVGQEVVIDQVLAVGNGAEIKVGTPLVSGASVKATVVAHGKHDKVHIFKMRRRKHYQKRQGHRQQFTELQIVAIAA</sequence>
<protein>
    <recommendedName>
        <fullName evidence="1">Large ribosomal subunit protein bL21</fullName>
    </recommendedName>
    <alternativeName>
        <fullName evidence="2">50S ribosomal protein L21</fullName>
    </alternativeName>
</protein>
<name>RL21_DELAS</name>
<feature type="chain" id="PRO_1000143781" description="Large ribosomal subunit protein bL21">
    <location>
        <begin position="1"/>
        <end position="103"/>
    </location>
</feature>
<reference key="1">
    <citation type="submission" date="2007-11" db="EMBL/GenBank/DDBJ databases">
        <title>Complete sequence of Delftia acidovorans DSM 14801 / SPH-1.</title>
        <authorList>
            <person name="Copeland A."/>
            <person name="Lucas S."/>
            <person name="Lapidus A."/>
            <person name="Barry K."/>
            <person name="Glavina del Rio T."/>
            <person name="Dalin E."/>
            <person name="Tice H."/>
            <person name="Pitluck S."/>
            <person name="Lowry S."/>
            <person name="Clum A."/>
            <person name="Schmutz J."/>
            <person name="Larimer F."/>
            <person name="Land M."/>
            <person name="Hauser L."/>
            <person name="Kyrpides N."/>
            <person name="Kim E."/>
            <person name="Schleheck D."/>
            <person name="Richardson P."/>
        </authorList>
    </citation>
    <scope>NUCLEOTIDE SEQUENCE [LARGE SCALE GENOMIC DNA]</scope>
    <source>
        <strain>DSM 14801 / SPH-1</strain>
    </source>
</reference>
<evidence type="ECO:0000255" key="1">
    <source>
        <dbReference type="HAMAP-Rule" id="MF_01363"/>
    </source>
</evidence>
<evidence type="ECO:0000305" key="2"/>
<proteinExistence type="inferred from homology"/>
<dbReference type="EMBL" id="CP000884">
    <property type="protein sequence ID" value="ABX38115.1"/>
    <property type="molecule type" value="Genomic_DNA"/>
</dbReference>
<dbReference type="RefSeq" id="WP_012207284.1">
    <property type="nucleotide sequence ID" value="NC_010002.1"/>
</dbReference>
<dbReference type="SMR" id="A9BP70"/>
<dbReference type="STRING" id="398578.Daci_5486"/>
<dbReference type="GeneID" id="94690510"/>
<dbReference type="KEGG" id="dac:Daci_5486"/>
<dbReference type="eggNOG" id="COG0261">
    <property type="taxonomic scope" value="Bacteria"/>
</dbReference>
<dbReference type="HOGENOM" id="CLU_061463_3_2_4"/>
<dbReference type="Proteomes" id="UP000000784">
    <property type="component" value="Chromosome"/>
</dbReference>
<dbReference type="GO" id="GO:0005737">
    <property type="term" value="C:cytoplasm"/>
    <property type="evidence" value="ECO:0007669"/>
    <property type="project" value="UniProtKB-ARBA"/>
</dbReference>
<dbReference type="GO" id="GO:1990904">
    <property type="term" value="C:ribonucleoprotein complex"/>
    <property type="evidence" value="ECO:0007669"/>
    <property type="project" value="UniProtKB-KW"/>
</dbReference>
<dbReference type="GO" id="GO:0005840">
    <property type="term" value="C:ribosome"/>
    <property type="evidence" value="ECO:0007669"/>
    <property type="project" value="UniProtKB-KW"/>
</dbReference>
<dbReference type="GO" id="GO:0019843">
    <property type="term" value="F:rRNA binding"/>
    <property type="evidence" value="ECO:0007669"/>
    <property type="project" value="UniProtKB-UniRule"/>
</dbReference>
<dbReference type="GO" id="GO:0003735">
    <property type="term" value="F:structural constituent of ribosome"/>
    <property type="evidence" value="ECO:0007669"/>
    <property type="project" value="InterPro"/>
</dbReference>
<dbReference type="GO" id="GO:0006412">
    <property type="term" value="P:translation"/>
    <property type="evidence" value="ECO:0007669"/>
    <property type="project" value="UniProtKB-UniRule"/>
</dbReference>
<dbReference type="HAMAP" id="MF_01363">
    <property type="entry name" value="Ribosomal_bL21"/>
    <property type="match status" value="1"/>
</dbReference>
<dbReference type="InterPro" id="IPR028909">
    <property type="entry name" value="bL21-like"/>
</dbReference>
<dbReference type="InterPro" id="IPR036164">
    <property type="entry name" value="bL21-like_sf"/>
</dbReference>
<dbReference type="InterPro" id="IPR001787">
    <property type="entry name" value="Ribosomal_bL21"/>
</dbReference>
<dbReference type="InterPro" id="IPR018258">
    <property type="entry name" value="Ribosomal_bL21_CS"/>
</dbReference>
<dbReference type="NCBIfam" id="TIGR00061">
    <property type="entry name" value="L21"/>
    <property type="match status" value="1"/>
</dbReference>
<dbReference type="PANTHER" id="PTHR21349">
    <property type="entry name" value="50S RIBOSOMAL PROTEIN L21"/>
    <property type="match status" value="1"/>
</dbReference>
<dbReference type="PANTHER" id="PTHR21349:SF0">
    <property type="entry name" value="LARGE RIBOSOMAL SUBUNIT PROTEIN BL21M"/>
    <property type="match status" value="1"/>
</dbReference>
<dbReference type="Pfam" id="PF00829">
    <property type="entry name" value="Ribosomal_L21p"/>
    <property type="match status" value="1"/>
</dbReference>
<dbReference type="SUPFAM" id="SSF141091">
    <property type="entry name" value="L21p-like"/>
    <property type="match status" value="1"/>
</dbReference>
<dbReference type="PROSITE" id="PS01169">
    <property type="entry name" value="RIBOSOMAL_L21"/>
    <property type="match status" value="1"/>
</dbReference>
<keyword id="KW-1185">Reference proteome</keyword>
<keyword id="KW-0687">Ribonucleoprotein</keyword>
<keyword id="KW-0689">Ribosomal protein</keyword>
<keyword id="KW-0694">RNA-binding</keyword>
<keyword id="KW-0699">rRNA-binding</keyword>
<accession>A9BP70</accession>
<gene>
    <name evidence="1" type="primary">rplU</name>
    <name type="ordered locus">Daci_5486</name>
</gene>
<comment type="function">
    <text evidence="1">This protein binds to 23S rRNA in the presence of protein L20.</text>
</comment>
<comment type="subunit">
    <text evidence="1">Part of the 50S ribosomal subunit. Contacts protein L20.</text>
</comment>
<comment type="similarity">
    <text evidence="1">Belongs to the bacterial ribosomal protein bL21 family.</text>
</comment>